<keyword id="KW-0687">Ribonucleoprotein</keyword>
<keyword id="KW-0689">Ribosomal protein</keyword>
<accession>B9MLF6</accession>
<proteinExistence type="inferred from homology"/>
<organism>
    <name type="scientific">Caldicellulosiruptor bescii (strain ATCC BAA-1888 / DSM 6725 / KCTC 15123 / Z-1320)</name>
    <name type="common">Anaerocellum thermophilum</name>
    <dbReference type="NCBI Taxonomy" id="521460"/>
    <lineage>
        <taxon>Bacteria</taxon>
        <taxon>Bacillati</taxon>
        <taxon>Bacillota</taxon>
        <taxon>Bacillota incertae sedis</taxon>
        <taxon>Caldicellulosiruptorales</taxon>
        <taxon>Caldicellulosiruptoraceae</taxon>
        <taxon>Caldicellulosiruptor</taxon>
    </lineage>
</organism>
<evidence type="ECO:0000255" key="1">
    <source>
        <dbReference type="HAMAP-Rule" id="MF_00532"/>
    </source>
</evidence>
<evidence type="ECO:0000305" key="2"/>
<gene>
    <name evidence="1" type="primary">rpsI</name>
    <name type="ordered locus">Athe_2069</name>
</gene>
<feature type="chain" id="PRO_1000146428" description="Small ribosomal subunit protein uS9">
    <location>
        <begin position="1"/>
        <end position="130"/>
    </location>
</feature>
<dbReference type="EMBL" id="CP001393">
    <property type="protein sequence ID" value="ACM61146.1"/>
    <property type="molecule type" value="Genomic_DNA"/>
</dbReference>
<dbReference type="RefSeq" id="WP_015908424.1">
    <property type="nucleotide sequence ID" value="NC_012034.1"/>
</dbReference>
<dbReference type="SMR" id="B9MLF6"/>
<dbReference type="STRING" id="521460.Athe_2069"/>
<dbReference type="GeneID" id="31773417"/>
<dbReference type="KEGG" id="ate:Athe_2069"/>
<dbReference type="eggNOG" id="COG0103">
    <property type="taxonomic scope" value="Bacteria"/>
</dbReference>
<dbReference type="HOGENOM" id="CLU_046483_2_1_9"/>
<dbReference type="Proteomes" id="UP000007723">
    <property type="component" value="Chromosome"/>
</dbReference>
<dbReference type="GO" id="GO:0022627">
    <property type="term" value="C:cytosolic small ribosomal subunit"/>
    <property type="evidence" value="ECO:0007669"/>
    <property type="project" value="TreeGrafter"/>
</dbReference>
<dbReference type="GO" id="GO:0003723">
    <property type="term" value="F:RNA binding"/>
    <property type="evidence" value="ECO:0007669"/>
    <property type="project" value="TreeGrafter"/>
</dbReference>
<dbReference type="GO" id="GO:0003735">
    <property type="term" value="F:structural constituent of ribosome"/>
    <property type="evidence" value="ECO:0007669"/>
    <property type="project" value="InterPro"/>
</dbReference>
<dbReference type="GO" id="GO:0006412">
    <property type="term" value="P:translation"/>
    <property type="evidence" value="ECO:0007669"/>
    <property type="project" value="UniProtKB-UniRule"/>
</dbReference>
<dbReference type="FunFam" id="3.30.230.10:FF:000001">
    <property type="entry name" value="30S ribosomal protein S9"/>
    <property type="match status" value="1"/>
</dbReference>
<dbReference type="Gene3D" id="3.30.230.10">
    <property type="match status" value="1"/>
</dbReference>
<dbReference type="HAMAP" id="MF_00532_B">
    <property type="entry name" value="Ribosomal_uS9_B"/>
    <property type="match status" value="1"/>
</dbReference>
<dbReference type="InterPro" id="IPR020568">
    <property type="entry name" value="Ribosomal_Su5_D2-typ_SF"/>
</dbReference>
<dbReference type="InterPro" id="IPR000754">
    <property type="entry name" value="Ribosomal_uS9"/>
</dbReference>
<dbReference type="InterPro" id="IPR023035">
    <property type="entry name" value="Ribosomal_uS9_bac/plastid"/>
</dbReference>
<dbReference type="InterPro" id="IPR020574">
    <property type="entry name" value="Ribosomal_uS9_CS"/>
</dbReference>
<dbReference type="InterPro" id="IPR014721">
    <property type="entry name" value="Ribsml_uS5_D2-typ_fold_subgr"/>
</dbReference>
<dbReference type="NCBIfam" id="NF001099">
    <property type="entry name" value="PRK00132.1"/>
    <property type="match status" value="1"/>
</dbReference>
<dbReference type="PANTHER" id="PTHR21569">
    <property type="entry name" value="RIBOSOMAL PROTEIN S9"/>
    <property type="match status" value="1"/>
</dbReference>
<dbReference type="PANTHER" id="PTHR21569:SF1">
    <property type="entry name" value="SMALL RIBOSOMAL SUBUNIT PROTEIN US9M"/>
    <property type="match status" value="1"/>
</dbReference>
<dbReference type="Pfam" id="PF00380">
    <property type="entry name" value="Ribosomal_S9"/>
    <property type="match status" value="1"/>
</dbReference>
<dbReference type="SUPFAM" id="SSF54211">
    <property type="entry name" value="Ribosomal protein S5 domain 2-like"/>
    <property type="match status" value="1"/>
</dbReference>
<dbReference type="PROSITE" id="PS00360">
    <property type="entry name" value="RIBOSOMAL_S9"/>
    <property type="match status" value="1"/>
</dbReference>
<name>RS9_CALBD</name>
<sequence length="130" mass="14507">MAQIKYYATGRRKTSVAKVWLSPGNGKIIVNDKNMEEYFPLETLRIIVKQPLTLTETLGKYDVIAKVKGGGLSGQAGAVRHGIARALVLADPTLRPVLKKAGFLTRDPRMVERKKYGLKKARRAPQFSKR</sequence>
<protein>
    <recommendedName>
        <fullName evidence="1">Small ribosomal subunit protein uS9</fullName>
    </recommendedName>
    <alternativeName>
        <fullName evidence="2">30S ribosomal protein S9</fullName>
    </alternativeName>
</protein>
<reference key="1">
    <citation type="submission" date="2009-01" db="EMBL/GenBank/DDBJ databases">
        <title>Complete sequence of chromosome of Caldicellulosiruptor becscii DSM 6725.</title>
        <authorList>
            <person name="Lucas S."/>
            <person name="Copeland A."/>
            <person name="Lapidus A."/>
            <person name="Glavina del Rio T."/>
            <person name="Tice H."/>
            <person name="Bruce D."/>
            <person name="Goodwin L."/>
            <person name="Pitluck S."/>
            <person name="Sims D."/>
            <person name="Meincke L."/>
            <person name="Brettin T."/>
            <person name="Detter J.C."/>
            <person name="Han C."/>
            <person name="Larimer F."/>
            <person name="Land M."/>
            <person name="Hauser L."/>
            <person name="Kyrpides N."/>
            <person name="Ovchinnikova G."/>
            <person name="Kataeva I."/>
            <person name="Adams M.W.W."/>
        </authorList>
    </citation>
    <scope>NUCLEOTIDE SEQUENCE [LARGE SCALE GENOMIC DNA]</scope>
    <source>
        <strain>ATCC BAA-1888 / DSM 6725 / KCTC 15123 / Z-1320</strain>
    </source>
</reference>
<comment type="similarity">
    <text evidence="1">Belongs to the universal ribosomal protein uS9 family.</text>
</comment>